<dbReference type="EMBL" id="AE014297">
    <property type="protein sequence ID" value="AAF55063.1"/>
    <property type="molecule type" value="Genomic_DNA"/>
</dbReference>
<dbReference type="EMBL" id="AY094892">
    <property type="protein sequence ID" value="AAM11245.1"/>
    <property type="molecule type" value="mRNA"/>
</dbReference>
<dbReference type="RefSeq" id="NP_524351.1">
    <property type="nucleotide sequence ID" value="NM_079627.3"/>
</dbReference>
<dbReference type="SMR" id="Q9VFJ2"/>
<dbReference type="BioGRID" id="66832">
    <property type="interactions" value="1"/>
</dbReference>
<dbReference type="DIP" id="DIP-23522N"/>
<dbReference type="FunCoup" id="Q9VFJ2">
    <property type="interactions" value="891"/>
</dbReference>
<dbReference type="IntAct" id="Q9VFJ2">
    <property type="interactions" value="4"/>
</dbReference>
<dbReference type="STRING" id="7227.FBpp0082412"/>
<dbReference type="PaxDb" id="7227-FBpp0082412"/>
<dbReference type="DNASU" id="41757"/>
<dbReference type="EnsemblMetazoa" id="FBtr0082953">
    <property type="protein sequence ID" value="FBpp0082412"/>
    <property type="gene ID" value="FBgn0038234"/>
</dbReference>
<dbReference type="GeneID" id="41757"/>
<dbReference type="KEGG" id="dme:Dmel_CG3351"/>
<dbReference type="AGR" id="FB:FBgn0038234"/>
<dbReference type="CTD" id="65003"/>
<dbReference type="FlyBase" id="FBgn0038234">
    <property type="gene designation" value="mRpL11"/>
</dbReference>
<dbReference type="VEuPathDB" id="VectorBase:FBgn0038234"/>
<dbReference type="eggNOG" id="KOG3257">
    <property type="taxonomic scope" value="Eukaryota"/>
</dbReference>
<dbReference type="GeneTree" id="ENSGT00390000003153"/>
<dbReference type="HOGENOM" id="CLU_074237_1_1_1"/>
<dbReference type="InParanoid" id="Q9VFJ2"/>
<dbReference type="OMA" id="CKQFNAK"/>
<dbReference type="OrthoDB" id="1091498at2759"/>
<dbReference type="PhylomeDB" id="Q9VFJ2"/>
<dbReference type="Reactome" id="R-DME-5389840">
    <property type="pathway name" value="Mitochondrial translation elongation"/>
</dbReference>
<dbReference type="Reactome" id="R-DME-5419276">
    <property type="pathway name" value="Mitochondrial translation termination"/>
</dbReference>
<dbReference type="BioGRID-ORCS" id="41757">
    <property type="hits" value="1 hit in 1 CRISPR screen"/>
</dbReference>
<dbReference type="GenomeRNAi" id="41757"/>
<dbReference type="PRO" id="PR:Q9VFJ2"/>
<dbReference type="Proteomes" id="UP000000803">
    <property type="component" value="Chromosome 3R"/>
</dbReference>
<dbReference type="Bgee" id="FBgn0038234">
    <property type="expression patterns" value="Expressed in T neuron T5d (Drosophila) in embryonic/larval optic lobe (Drosophila) and 78 other cell types or tissues"/>
</dbReference>
<dbReference type="GO" id="GO:0005762">
    <property type="term" value="C:mitochondrial large ribosomal subunit"/>
    <property type="evidence" value="ECO:0000250"/>
    <property type="project" value="UniProtKB"/>
</dbReference>
<dbReference type="GO" id="GO:0070180">
    <property type="term" value="F:large ribosomal subunit rRNA binding"/>
    <property type="evidence" value="ECO:0000318"/>
    <property type="project" value="GO_Central"/>
</dbReference>
<dbReference type="GO" id="GO:0003735">
    <property type="term" value="F:structural constituent of ribosome"/>
    <property type="evidence" value="ECO:0000318"/>
    <property type="project" value="GO_Central"/>
</dbReference>
<dbReference type="GO" id="GO:0032543">
    <property type="term" value="P:mitochondrial translation"/>
    <property type="evidence" value="ECO:0000304"/>
    <property type="project" value="FlyBase"/>
</dbReference>
<dbReference type="GO" id="GO:0006417">
    <property type="term" value="P:regulation of translation"/>
    <property type="evidence" value="ECO:0007669"/>
    <property type="project" value="UniProtKB-KW"/>
</dbReference>
<dbReference type="GO" id="GO:0031047">
    <property type="term" value="P:regulatory ncRNA-mediated gene silencing"/>
    <property type="evidence" value="ECO:0007669"/>
    <property type="project" value="UniProtKB-KW"/>
</dbReference>
<dbReference type="GO" id="GO:0006412">
    <property type="term" value="P:translation"/>
    <property type="evidence" value="ECO:0000318"/>
    <property type="project" value="GO_Central"/>
</dbReference>
<dbReference type="CDD" id="cd00349">
    <property type="entry name" value="Ribosomal_L11"/>
    <property type="match status" value="1"/>
</dbReference>
<dbReference type="FunFam" id="1.10.10.250:FF:000008">
    <property type="entry name" value="39S ribosomal protein L11, mitochondrial"/>
    <property type="match status" value="1"/>
</dbReference>
<dbReference type="FunFam" id="3.30.1550.10:FF:000003">
    <property type="entry name" value="39S ribosomal protein L11, mitochondrial"/>
    <property type="match status" value="1"/>
</dbReference>
<dbReference type="Gene3D" id="1.10.10.250">
    <property type="entry name" value="Ribosomal protein L11, C-terminal domain"/>
    <property type="match status" value="1"/>
</dbReference>
<dbReference type="Gene3D" id="3.30.1550.10">
    <property type="entry name" value="Ribosomal protein L11/L12, N-terminal domain"/>
    <property type="match status" value="1"/>
</dbReference>
<dbReference type="HAMAP" id="MF_00736">
    <property type="entry name" value="Ribosomal_uL11"/>
    <property type="match status" value="1"/>
</dbReference>
<dbReference type="InterPro" id="IPR000911">
    <property type="entry name" value="Ribosomal_uL11"/>
</dbReference>
<dbReference type="InterPro" id="IPR020783">
    <property type="entry name" value="Ribosomal_uL11_C"/>
</dbReference>
<dbReference type="InterPro" id="IPR036769">
    <property type="entry name" value="Ribosomal_uL11_C_sf"/>
</dbReference>
<dbReference type="InterPro" id="IPR020784">
    <property type="entry name" value="Ribosomal_uL11_N"/>
</dbReference>
<dbReference type="InterPro" id="IPR036796">
    <property type="entry name" value="Ribosomal_uL11_N_sf"/>
</dbReference>
<dbReference type="PANTHER" id="PTHR11661">
    <property type="entry name" value="60S RIBOSOMAL PROTEIN L12"/>
    <property type="match status" value="1"/>
</dbReference>
<dbReference type="PANTHER" id="PTHR11661:SF1">
    <property type="entry name" value="LARGE RIBOSOMAL SUBUNIT PROTEIN UL11M"/>
    <property type="match status" value="1"/>
</dbReference>
<dbReference type="Pfam" id="PF00298">
    <property type="entry name" value="Ribosomal_L11"/>
    <property type="match status" value="1"/>
</dbReference>
<dbReference type="Pfam" id="PF03946">
    <property type="entry name" value="Ribosomal_L11_N"/>
    <property type="match status" value="1"/>
</dbReference>
<dbReference type="SMART" id="SM00649">
    <property type="entry name" value="RL11"/>
    <property type="match status" value="1"/>
</dbReference>
<dbReference type="SUPFAM" id="SSF54747">
    <property type="entry name" value="Ribosomal L11/L12e N-terminal domain"/>
    <property type="match status" value="1"/>
</dbReference>
<dbReference type="SUPFAM" id="SSF46906">
    <property type="entry name" value="Ribosomal protein L11, C-terminal domain"/>
    <property type="match status" value="1"/>
</dbReference>
<protein>
    <recommendedName>
        <fullName evidence="3">Large ribosomal subunit protein uL11m</fullName>
    </recommendedName>
    <alternativeName>
        <fullName>39S ribosomal protein L11, mitochondrial</fullName>
        <shortName>L11mt</shortName>
        <shortName>MRP-L11</shortName>
    </alternativeName>
</protein>
<proteinExistence type="evidence at transcript level"/>
<keyword id="KW-0496">Mitochondrion</keyword>
<keyword id="KW-1185">Reference proteome</keyword>
<keyword id="KW-0687">Ribonucleoprotein</keyword>
<keyword id="KW-0689">Ribosomal protein</keyword>
<keyword id="KW-0943">RNA-mediated gene silencing</keyword>
<keyword id="KW-0809">Transit peptide</keyword>
<keyword id="KW-0810">Translation regulation</keyword>
<evidence type="ECO:0000250" key="1">
    <source>
        <dbReference type="UniProtKB" id="Q9Y3B7"/>
    </source>
</evidence>
<evidence type="ECO:0000255" key="2"/>
<evidence type="ECO:0000305" key="3"/>
<sequence length="196" mass="21612">MSKAAGKLKSLKKTVERVTHTSKLKTNIPAGMAAAGPPLGPMLGQRAINIAAFCKDFNAKTAEMKEGVPLPCRISVNSDRSYDLAIHHPPATFFLKQAAGIQRGTMTPGKEVAGMITLKHLYEIAAIKIQDPPNVLLTMQQMCEMLISIARTCGIKVVREIDPAAYGEFLEERKLIVEQQRRELQEKREAKMLRTG</sequence>
<name>RM11_DROME</name>
<accession>Q9VFJ2</accession>
<reference key="1">
    <citation type="journal article" date="2000" name="Science">
        <title>The genome sequence of Drosophila melanogaster.</title>
        <authorList>
            <person name="Adams M.D."/>
            <person name="Celniker S.E."/>
            <person name="Holt R.A."/>
            <person name="Evans C.A."/>
            <person name="Gocayne J.D."/>
            <person name="Amanatides P.G."/>
            <person name="Scherer S.E."/>
            <person name="Li P.W."/>
            <person name="Hoskins R.A."/>
            <person name="Galle R.F."/>
            <person name="George R.A."/>
            <person name="Lewis S.E."/>
            <person name="Richards S."/>
            <person name="Ashburner M."/>
            <person name="Henderson S.N."/>
            <person name="Sutton G.G."/>
            <person name="Wortman J.R."/>
            <person name="Yandell M.D."/>
            <person name="Zhang Q."/>
            <person name="Chen L.X."/>
            <person name="Brandon R.C."/>
            <person name="Rogers Y.-H.C."/>
            <person name="Blazej R.G."/>
            <person name="Champe M."/>
            <person name="Pfeiffer B.D."/>
            <person name="Wan K.H."/>
            <person name="Doyle C."/>
            <person name="Baxter E.G."/>
            <person name="Helt G."/>
            <person name="Nelson C.R."/>
            <person name="Miklos G.L.G."/>
            <person name="Abril J.F."/>
            <person name="Agbayani A."/>
            <person name="An H.-J."/>
            <person name="Andrews-Pfannkoch C."/>
            <person name="Baldwin D."/>
            <person name="Ballew R.M."/>
            <person name="Basu A."/>
            <person name="Baxendale J."/>
            <person name="Bayraktaroglu L."/>
            <person name="Beasley E.M."/>
            <person name="Beeson K.Y."/>
            <person name="Benos P.V."/>
            <person name="Berman B.P."/>
            <person name="Bhandari D."/>
            <person name="Bolshakov S."/>
            <person name="Borkova D."/>
            <person name="Botchan M.R."/>
            <person name="Bouck J."/>
            <person name="Brokstein P."/>
            <person name="Brottier P."/>
            <person name="Burtis K.C."/>
            <person name="Busam D.A."/>
            <person name="Butler H."/>
            <person name="Cadieu E."/>
            <person name="Center A."/>
            <person name="Chandra I."/>
            <person name="Cherry J.M."/>
            <person name="Cawley S."/>
            <person name="Dahlke C."/>
            <person name="Davenport L.B."/>
            <person name="Davies P."/>
            <person name="de Pablos B."/>
            <person name="Delcher A."/>
            <person name="Deng Z."/>
            <person name="Mays A.D."/>
            <person name="Dew I."/>
            <person name="Dietz S.M."/>
            <person name="Dodson K."/>
            <person name="Doup L.E."/>
            <person name="Downes M."/>
            <person name="Dugan-Rocha S."/>
            <person name="Dunkov B.C."/>
            <person name="Dunn P."/>
            <person name="Durbin K.J."/>
            <person name="Evangelista C.C."/>
            <person name="Ferraz C."/>
            <person name="Ferriera S."/>
            <person name="Fleischmann W."/>
            <person name="Fosler C."/>
            <person name="Gabrielian A.E."/>
            <person name="Garg N.S."/>
            <person name="Gelbart W.M."/>
            <person name="Glasser K."/>
            <person name="Glodek A."/>
            <person name="Gong F."/>
            <person name="Gorrell J.H."/>
            <person name="Gu Z."/>
            <person name="Guan P."/>
            <person name="Harris M."/>
            <person name="Harris N.L."/>
            <person name="Harvey D.A."/>
            <person name="Heiman T.J."/>
            <person name="Hernandez J.R."/>
            <person name="Houck J."/>
            <person name="Hostin D."/>
            <person name="Houston K.A."/>
            <person name="Howland T.J."/>
            <person name="Wei M.-H."/>
            <person name="Ibegwam C."/>
            <person name="Jalali M."/>
            <person name="Kalush F."/>
            <person name="Karpen G.H."/>
            <person name="Ke Z."/>
            <person name="Kennison J.A."/>
            <person name="Ketchum K.A."/>
            <person name="Kimmel B.E."/>
            <person name="Kodira C.D."/>
            <person name="Kraft C.L."/>
            <person name="Kravitz S."/>
            <person name="Kulp D."/>
            <person name="Lai Z."/>
            <person name="Lasko P."/>
            <person name="Lei Y."/>
            <person name="Levitsky A.A."/>
            <person name="Li J.H."/>
            <person name="Li Z."/>
            <person name="Liang Y."/>
            <person name="Lin X."/>
            <person name="Liu X."/>
            <person name="Mattei B."/>
            <person name="McIntosh T.C."/>
            <person name="McLeod M.P."/>
            <person name="McPherson D."/>
            <person name="Merkulov G."/>
            <person name="Milshina N.V."/>
            <person name="Mobarry C."/>
            <person name="Morris J."/>
            <person name="Moshrefi A."/>
            <person name="Mount S.M."/>
            <person name="Moy M."/>
            <person name="Murphy B."/>
            <person name="Murphy L."/>
            <person name="Muzny D.M."/>
            <person name="Nelson D.L."/>
            <person name="Nelson D.R."/>
            <person name="Nelson K.A."/>
            <person name="Nixon K."/>
            <person name="Nusskern D.R."/>
            <person name="Pacleb J.M."/>
            <person name="Palazzolo M."/>
            <person name="Pittman G.S."/>
            <person name="Pan S."/>
            <person name="Pollard J."/>
            <person name="Puri V."/>
            <person name="Reese M.G."/>
            <person name="Reinert K."/>
            <person name="Remington K."/>
            <person name="Saunders R.D.C."/>
            <person name="Scheeler F."/>
            <person name="Shen H."/>
            <person name="Shue B.C."/>
            <person name="Siden-Kiamos I."/>
            <person name="Simpson M."/>
            <person name="Skupski M.P."/>
            <person name="Smith T.J."/>
            <person name="Spier E."/>
            <person name="Spradling A.C."/>
            <person name="Stapleton M."/>
            <person name="Strong R."/>
            <person name="Sun E."/>
            <person name="Svirskas R."/>
            <person name="Tector C."/>
            <person name="Turner R."/>
            <person name="Venter E."/>
            <person name="Wang A.H."/>
            <person name="Wang X."/>
            <person name="Wang Z.-Y."/>
            <person name="Wassarman D.A."/>
            <person name="Weinstock G.M."/>
            <person name="Weissenbach J."/>
            <person name="Williams S.M."/>
            <person name="Woodage T."/>
            <person name="Worley K.C."/>
            <person name="Wu D."/>
            <person name="Yang S."/>
            <person name="Yao Q.A."/>
            <person name="Ye J."/>
            <person name="Yeh R.-F."/>
            <person name="Zaveri J.S."/>
            <person name="Zhan M."/>
            <person name="Zhang G."/>
            <person name="Zhao Q."/>
            <person name="Zheng L."/>
            <person name="Zheng X.H."/>
            <person name="Zhong F.N."/>
            <person name="Zhong W."/>
            <person name="Zhou X."/>
            <person name="Zhu S.C."/>
            <person name="Zhu X."/>
            <person name="Smith H.O."/>
            <person name="Gibbs R.A."/>
            <person name="Myers E.W."/>
            <person name="Rubin G.M."/>
            <person name="Venter J.C."/>
        </authorList>
    </citation>
    <scope>NUCLEOTIDE SEQUENCE [LARGE SCALE GENOMIC DNA]</scope>
    <source>
        <strain>Berkeley</strain>
    </source>
</reference>
<reference key="2">
    <citation type="journal article" date="2002" name="Genome Biol.">
        <title>Annotation of the Drosophila melanogaster euchromatic genome: a systematic review.</title>
        <authorList>
            <person name="Misra S."/>
            <person name="Crosby M.A."/>
            <person name="Mungall C.J."/>
            <person name="Matthews B.B."/>
            <person name="Campbell K.S."/>
            <person name="Hradecky P."/>
            <person name="Huang Y."/>
            <person name="Kaminker J.S."/>
            <person name="Millburn G.H."/>
            <person name="Prochnik S.E."/>
            <person name="Smith C.D."/>
            <person name="Tupy J.L."/>
            <person name="Whitfield E.J."/>
            <person name="Bayraktaroglu L."/>
            <person name="Berman B.P."/>
            <person name="Bettencourt B.R."/>
            <person name="Celniker S.E."/>
            <person name="de Grey A.D.N.J."/>
            <person name="Drysdale R.A."/>
            <person name="Harris N.L."/>
            <person name="Richter J."/>
            <person name="Russo S."/>
            <person name="Schroeder A.J."/>
            <person name="Shu S.Q."/>
            <person name="Stapleton M."/>
            <person name="Yamada C."/>
            <person name="Ashburner M."/>
            <person name="Gelbart W.M."/>
            <person name="Rubin G.M."/>
            <person name="Lewis S.E."/>
        </authorList>
    </citation>
    <scope>GENOME REANNOTATION</scope>
    <source>
        <strain>Berkeley</strain>
    </source>
</reference>
<reference key="3">
    <citation type="journal article" date="2002" name="Genome Biol.">
        <title>A Drosophila full-length cDNA resource.</title>
        <authorList>
            <person name="Stapleton M."/>
            <person name="Carlson J.W."/>
            <person name="Brokstein P."/>
            <person name="Yu C."/>
            <person name="Champe M."/>
            <person name="George R.A."/>
            <person name="Guarin H."/>
            <person name="Kronmiller B."/>
            <person name="Pacleb J.M."/>
            <person name="Park S."/>
            <person name="Wan K.H."/>
            <person name="Rubin G.M."/>
            <person name="Celniker S.E."/>
        </authorList>
    </citation>
    <scope>NUCLEOTIDE SEQUENCE [LARGE SCALE MRNA]</scope>
    <source>
        <strain>Berkeley</strain>
    </source>
</reference>
<comment type="subunit">
    <text evidence="1">Component of the mitochondrial ribosome large subunit (39S) which comprises a 16S rRNA and about 50 distinct proteins.</text>
</comment>
<comment type="subcellular location">
    <subcellularLocation>
        <location evidence="1">Mitochondrion</location>
    </subcellularLocation>
</comment>
<comment type="similarity">
    <text evidence="3">Belongs to the universal ribosomal protein uL11 family.</text>
</comment>
<gene>
    <name type="primary">mRpL11</name>
    <name type="ORF">CG3351</name>
</gene>
<organism>
    <name type="scientific">Drosophila melanogaster</name>
    <name type="common">Fruit fly</name>
    <dbReference type="NCBI Taxonomy" id="7227"/>
    <lineage>
        <taxon>Eukaryota</taxon>
        <taxon>Metazoa</taxon>
        <taxon>Ecdysozoa</taxon>
        <taxon>Arthropoda</taxon>
        <taxon>Hexapoda</taxon>
        <taxon>Insecta</taxon>
        <taxon>Pterygota</taxon>
        <taxon>Neoptera</taxon>
        <taxon>Endopterygota</taxon>
        <taxon>Diptera</taxon>
        <taxon>Brachycera</taxon>
        <taxon>Muscomorpha</taxon>
        <taxon>Ephydroidea</taxon>
        <taxon>Drosophilidae</taxon>
        <taxon>Drosophila</taxon>
        <taxon>Sophophora</taxon>
    </lineage>
</organism>
<feature type="transit peptide" description="Mitochondrion" evidence="2">
    <location>
        <begin position="1"/>
        <end status="unknown"/>
    </location>
</feature>
<feature type="chain" id="PRO_0000030446" description="Large ribosomal subunit protein uL11m">
    <location>
        <begin status="unknown"/>
        <end position="196"/>
    </location>
</feature>